<organism>
    <name type="scientific">Conus bayani</name>
    <name type="common">Bayan's cone</name>
    <name type="synonym">Stellaconus bayani</name>
    <dbReference type="NCBI Taxonomy" id="2070216"/>
    <lineage>
        <taxon>Eukaryota</taxon>
        <taxon>Metazoa</taxon>
        <taxon>Spiralia</taxon>
        <taxon>Lophotrochozoa</taxon>
        <taxon>Mollusca</taxon>
        <taxon>Gastropoda</taxon>
        <taxon>Caenogastropoda</taxon>
        <taxon>Neogastropoda</taxon>
        <taxon>Conoidea</taxon>
        <taxon>Conidae</taxon>
        <taxon>Conus</taxon>
        <taxon>Splinoconus</taxon>
    </lineage>
</organism>
<protein>
    <recommendedName>
        <fullName evidence="4">Conotoxin ba5b</fullName>
    </recommendedName>
    <alternativeName>
        <fullName evidence="5">Conotoxin ba5.1</fullName>
    </alternativeName>
    <component>
        <recommendedName>
            <fullName evidence="4">Conotoxin ba5a</fullName>
        </recommendedName>
    </component>
</protein>
<sequence length="71" mass="7852">MLCLPVFITLLLLVSPSAALPVESELQRDLTQDSPKDFRIREPLLLSKMFDRSCCGSSNTGSCCGRYQRGS</sequence>
<name>CT5B_CONBY</name>
<accession>P0DTJ5</accession>
<reference key="1">
    <citation type="journal article" date="2021" name="Mar. Drugs">
        <title>Diversity of Conopeptides and Conoenzymes from the Venom Duct of the Marine Cone Snail Conus bayani as Determined from Transcriptomic and Proteomic Analyses.</title>
        <authorList>
            <person name="Rajaian Pushpabai R."/>
            <person name="Wilson Alphonse C.R."/>
            <person name="Mani R."/>
            <person name="Arun Apte D."/>
            <person name="Franklin J.B."/>
        </authorList>
    </citation>
    <scope>NUCLEOTIDE SEQUENCE [MRNA]</scope>
    <scope>PROTEIN SEQUENCE OF 53-64</scope>
    <scope>MASS SPECTROMETRY</scope>
    <scope>SUBCELLULAR LOCATION</scope>
    <scope>AMIDATION AT CYS-64</scope>
    <source>
        <tissue>Venom</tissue>
        <tissue>Venom duct</tissue>
    </source>
</reference>
<feature type="signal peptide" evidence="2">
    <location>
        <begin position="1"/>
        <end position="19"/>
    </location>
</feature>
<feature type="propeptide" id="PRO_0000454986" evidence="6">
    <location>
        <begin position="20"/>
        <end position="52"/>
    </location>
</feature>
<feature type="peptide" id="PRO_0000454987" description="Conotoxin ba5b" evidence="3">
    <location>
        <begin position="53"/>
        <end position="64"/>
    </location>
</feature>
<feature type="peptide" id="PRO_0000454988" description="Conotoxin ba5a" evidence="3">
    <location>
        <begin position="54"/>
        <end position="64"/>
    </location>
</feature>
<feature type="propeptide" id="PRO_0000454989" evidence="5">
    <location>
        <begin position="66"/>
        <end position="71"/>
    </location>
</feature>
<feature type="modified residue" description="Cysteine amide" evidence="3">
    <location>
        <position position="64"/>
    </location>
</feature>
<feature type="disulfide bond" evidence="1">
    <location>
        <begin position="54"/>
        <end position="63"/>
    </location>
</feature>
<feature type="disulfide bond" evidence="1">
    <location>
        <begin position="55"/>
        <end position="64"/>
    </location>
</feature>
<keyword id="KW-0027">Amidation</keyword>
<keyword id="KW-0903">Direct protein sequencing</keyword>
<keyword id="KW-1015">Disulfide bond</keyword>
<keyword id="KW-0964">Secreted</keyword>
<keyword id="KW-0732">Signal</keyword>
<keyword id="KW-0800">Toxin</keyword>
<dbReference type="GO" id="GO:0005576">
    <property type="term" value="C:extracellular region"/>
    <property type="evidence" value="ECO:0007669"/>
    <property type="project" value="UniProtKB-SubCell"/>
</dbReference>
<dbReference type="GO" id="GO:0090729">
    <property type="term" value="F:toxin activity"/>
    <property type="evidence" value="ECO:0007669"/>
    <property type="project" value="UniProtKB-KW"/>
</dbReference>
<dbReference type="InterPro" id="IPR031565">
    <property type="entry name" value="T-conotoxin"/>
</dbReference>
<dbReference type="Pfam" id="PF16981">
    <property type="entry name" value="Chi-conotoxin"/>
    <property type="match status" value="1"/>
</dbReference>
<evidence type="ECO:0000250" key="1">
    <source>
        <dbReference type="UniProtKB" id="P81755"/>
    </source>
</evidence>
<evidence type="ECO:0000255" key="2"/>
<evidence type="ECO:0000269" key="3">
    <source>
    </source>
</evidence>
<evidence type="ECO:0000303" key="4">
    <source>
    </source>
</evidence>
<evidence type="ECO:0000305" key="5"/>
<evidence type="ECO:0000305" key="6">
    <source>
    </source>
</evidence>
<comment type="subcellular location">
    <subcellularLocation>
        <location evidence="3">Secreted</location>
    </subcellularLocation>
</comment>
<comment type="tissue specificity">
    <text evidence="6">Expressed by the venom duct.</text>
</comment>
<comment type="domain">
    <text evidence="5">The cysteine framework is V (CC-CC).</text>
</comment>
<comment type="mass spectrometry" mass="1016.6" method="MALDI" evidence="3">
    <molecule>Conotoxin ba5a</molecule>
</comment>
<comment type="mass spectrometry" mass="1103.3" method="MALDI" evidence="3">
    <molecule>Conotoxin ba5b</molecule>
</comment>
<comment type="similarity">
    <text evidence="5">Belongs to the conotoxin T superfamily.</text>
</comment>
<proteinExistence type="evidence at protein level"/>